<accession>A4XT53</accession>
<dbReference type="EMBL" id="CP000680">
    <property type="protein sequence ID" value="ABP84519.1"/>
    <property type="molecule type" value="Genomic_DNA"/>
</dbReference>
<dbReference type="SMR" id="A4XT53"/>
<dbReference type="STRING" id="399739.Pmen_1755"/>
<dbReference type="KEGG" id="pmy:Pmen_1755"/>
<dbReference type="PATRIC" id="fig|399739.8.peg.1779"/>
<dbReference type="eggNOG" id="COG1492">
    <property type="taxonomic scope" value="Bacteria"/>
</dbReference>
<dbReference type="HOGENOM" id="CLU_019250_2_0_6"/>
<dbReference type="OrthoDB" id="9808302at2"/>
<dbReference type="UniPathway" id="UPA00148"/>
<dbReference type="GO" id="GO:0015420">
    <property type="term" value="F:ABC-type vitamin B12 transporter activity"/>
    <property type="evidence" value="ECO:0007669"/>
    <property type="project" value="UniProtKB-UniRule"/>
</dbReference>
<dbReference type="GO" id="GO:0003824">
    <property type="term" value="F:catalytic activity"/>
    <property type="evidence" value="ECO:0007669"/>
    <property type="project" value="InterPro"/>
</dbReference>
<dbReference type="GO" id="GO:0009236">
    <property type="term" value="P:cobalamin biosynthetic process"/>
    <property type="evidence" value="ECO:0007669"/>
    <property type="project" value="UniProtKB-UniRule"/>
</dbReference>
<dbReference type="CDD" id="cd05389">
    <property type="entry name" value="CobQ_N"/>
    <property type="match status" value="1"/>
</dbReference>
<dbReference type="CDD" id="cd01750">
    <property type="entry name" value="GATase1_CobQ"/>
    <property type="match status" value="1"/>
</dbReference>
<dbReference type="Gene3D" id="3.40.50.880">
    <property type="match status" value="1"/>
</dbReference>
<dbReference type="Gene3D" id="3.40.50.300">
    <property type="entry name" value="P-loop containing nucleotide triphosphate hydrolases"/>
    <property type="match status" value="1"/>
</dbReference>
<dbReference type="HAMAP" id="MF_00028">
    <property type="entry name" value="CobQ"/>
    <property type="match status" value="1"/>
</dbReference>
<dbReference type="InterPro" id="IPR029062">
    <property type="entry name" value="Class_I_gatase-like"/>
</dbReference>
<dbReference type="InterPro" id="IPR002586">
    <property type="entry name" value="CobQ/CobB/MinD/ParA_Nub-bd_dom"/>
</dbReference>
<dbReference type="InterPro" id="IPR033949">
    <property type="entry name" value="CobQ_GATase1"/>
</dbReference>
<dbReference type="InterPro" id="IPR047045">
    <property type="entry name" value="CobQ_N"/>
</dbReference>
<dbReference type="InterPro" id="IPR004459">
    <property type="entry name" value="CobQ_synth"/>
</dbReference>
<dbReference type="InterPro" id="IPR011698">
    <property type="entry name" value="GATase_3"/>
</dbReference>
<dbReference type="InterPro" id="IPR027417">
    <property type="entry name" value="P-loop_NTPase"/>
</dbReference>
<dbReference type="NCBIfam" id="TIGR00313">
    <property type="entry name" value="cobQ"/>
    <property type="match status" value="1"/>
</dbReference>
<dbReference type="NCBIfam" id="NF001989">
    <property type="entry name" value="PRK00784.1"/>
    <property type="match status" value="1"/>
</dbReference>
<dbReference type="PANTHER" id="PTHR21343:SF1">
    <property type="entry name" value="COBYRIC ACID SYNTHASE"/>
    <property type="match status" value="1"/>
</dbReference>
<dbReference type="PANTHER" id="PTHR21343">
    <property type="entry name" value="DETHIOBIOTIN SYNTHETASE"/>
    <property type="match status" value="1"/>
</dbReference>
<dbReference type="Pfam" id="PF01656">
    <property type="entry name" value="CbiA"/>
    <property type="match status" value="1"/>
</dbReference>
<dbReference type="Pfam" id="PF07685">
    <property type="entry name" value="GATase_3"/>
    <property type="match status" value="1"/>
</dbReference>
<dbReference type="SUPFAM" id="SSF52317">
    <property type="entry name" value="Class I glutamine amidotransferase-like"/>
    <property type="match status" value="1"/>
</dbReference>
<dbReference type="SUPFAM" id="SSF52540">
    <property type="entry name" value="P-loop containing nucleoside triphosphate hydrolases"/>
    <property type="match status" value="1"/>
</dbReference>
<dbReference type="PROSITE" id="PS51274">
    <property type="entry name" value="GATASE_COBBQ"/>
    <property type="match status" value="1"/>
</dbReference>
<sequence length="483" mass="51911">MPTLMVQGTTSDAGKSTLVTALCRWARRQGVSVAPFKPQNMALNSAVTADGGEIGRAQAVQAQAAGLAPHTDMNPVLLKPNSDMGAQVIIHGRAIGNMQALTYHGYKPVAMAAVLESHARLVERHQLVLVEGAGSPAEINLRAGDIANMGFAEAVDCPVILIADIDKGGVFAHLVGTLELLSPSEQARIRGFVINRFRGDIALLKPGLDWLEQRTGKPVLGVLPYLTDFHLEAEDAVDTRQQAKSAQALRVVVPVLPRISNHTDFDPLRLHPQVQLTFVGPGQAIPPADLIILPGSKSVRADLARLREQGWDTAIARHLRYGGKLLGICGGLQMLGRQIHDPHGLEGAAGSSEGLGLLDFETVLEPEKQLRNVRGQLCLEQAQVSGYEIHAGVSRGPGLNGAVQLDDGRSDGGLSADGQVLGTYLHGLFEQPSAFAALLRWAGLHEVQTVDYQALRERDIERLADQVELHLDNEQLRMLCGIR</sequence>
<proteinExistence type="inferred from homology"/>
<organism>
    <name type="scientific">Ectopseudomonas mendocina (strain ymp)</name>
    <name type="common">Pseudomonas mendocina</name>
    <dbReference type="NCBI Taxonomy" id="399739"/>
    <lineage>
        <taxon>Bacteria</taxon>
        <taxon>Pseudomonadati</taxon>
        <taxon>Pseudomonadota</taxon>
        <taxon>Gammaproteobacteria</taxon>
        <taxon>Pseudomonadales</taxon>
        <taxon>Pseudomonadaceae</taxon>
        <taxon>Ectopseudomonas</taxon>
    </lineage>
</organism>
<name>COBQ_ECTM1</name>
<reference key="1">
    <citation type="submission" date="2007-04" db="EMBL/GenBank/DDBJ databases">
        <title>Complete sequence of Pseudomonas mendocina ymp.</title>
        <authorList>
            <consortium name="US DOE Joint Genome Institute"/>
            <person name="Copeland A."/>
            <person name="Lucas S."/>
            <person name="Lapidus A."/>
            <person name="Barry K."/>
            <person name="Glavina del Rio T."/>
            <person name="Dalin E."/>
            <person name="Tice H."/>
            <person name="Pitluck S."/>
            <person name="Kiss H."/>
            <person name="Brettin T."/>
            <person name="Detter J.C."/>
            <person name="Bruce D."/>
            <person name="Han C."/>
            <person name="Schmutz J."/>
            <person name="Larimer F."/>
            <person name="Land M."/>
            <person name="Hauser L."/>
            <person name="Kyrpides N."/>
            <person name="Mikhailova N."/>
            <person name="Hersman L."/>
            <person name="Dubois J."/>
            <person name="Maurice P."/>
            <person name="Richardson P."/>
        </authorList>
    </citation>
    <scope>NUCLEOTIDE SEQUENCE [LARGE SCALE GENOMIC DNA]</scope>
    <source>
        <strain>ymp</strain>
    </source>
</reference>
<protein>
    <recommendedName>
        <fullName evidence="1">Cobyric acid synthase</fullName>
    </recommendedName>
</protein>
<evidence type="ECO:0000255" key="1">
    <source>
        <dbReference type="HAMAP-Rule" id="MF_00028"/>
    </source>
</evidence>
<keyword id="KW-0169">Cobalamin biosynthesis</keyword>
<keyword id="KW-0315">Glutamine amidotransferase</keyword>
<gene>
    <name evidence="1" type="primary">cobQ</name>
    <name type="ordered locus">Pmen_1755</name>
</gene>
<comment type="function">
    <text evidence="1">Catalyzes amidations at positions B, D, E, and G on adenosylcobyrinic A,C-diamide. NH(2) groups are provided by glutamine, and one molecule of ATP is hydrogenolyzed for each amidation.</text>
</comment>
<comment type="pathway">
    <text evidence="1">Cofactor biosynthesis; adenosylcobalamin biosynthesis.</text>
</comment>
<comment type="similarity">
    <text evidence="1">Belongs to the CobB/CobQ family. CobQ subfamily.</text>
</comment>
<feature type="chain" id="PRO_0000332372" description="Cobyric acid synthase">
    <location>
        <begin position="1"/>
        <end position="483"/>
    </location>
</feature>
<feature type="domain" description="GATase cobBQ-type" evidence="1">
    <location>
        <begin position="248"/>
        <end position="434"/>
    </location>
</feature>
<feature type="active site" description="Nucleophile" evidence="1">
    <location>
        <position position="329"/>
    </location>
</feature>
<feature type="active site" evidence="1">
    <location>
        <position position="426"/>
    </location>
</feature>